<organism>
    <name type="scientific">Bacillus thuringiensis subsp. konkukian (strain 97-27)</name>
    <dbReference type="NCBI Taxonomy" id="281309"/>
    <lineage>
        <taxon>Bacteria</taxon>
        <taxon>Bacillati</taxon>
        <taxon>Bacillota</taxon>
        <taxon>Bacilli</taxon>
        <taxon>Bacillales</taxon>
        <taxon>Bacillaceae</taxon>
        <taxon>Bacillus</taxon>
        <taxon>Bacillus cereus group</taxon>
    </lineage>
</organism>
<accession>Q6HFB2</accession>
<gene>
    <name type="ordered locus">BT9727_3443</name>
</gene>
<feature type="chain" id="PRO_0000094962" description="UPF0291 protein BT9727_3443">
    <location>
        <begin position="1"/>
        <end position="79"/>
    </location>
</feature>
<sequence length="79" mass="9138">MLSHELVERINFLAKKAKAEGLTEEEQRERQSLREQYLKGFRQNMLNELKGIKVVNEQGTDVTPAKLKALKKQDNAKLN</sequence>
<keyword id="KW-0963">Cytoplasm</keyword>
<comment type="subcellular location">
    <subcellularLocation>
        <location evidence="1">Cytoplasm</location>
    </subcellularLocation>
</comment>
<comment type="similarity">
    <text evidence="1">Belongs to the UPF0291 family.</text>
</comment>
<dbReference type="EMBL" id="AE017355">
    <property type="protein sequence ID" value="AAT61638.1"/>
    <property type="molecule type" value="Genomic_DNA"/>
</dbReference>
<dbReference type="RefSeq" id="WP_000948565.1">
    <property type="nucleotide sequence ID" value="NC_005957.1"/>
</dbReference>
<dbReference type="RefSeq" id="YP_037764.1">
    <property type="nucleotide sequence ID" value="NC_005957.1"/>
</dbReference>
<dbReference type="SMR" id="Q6HFB2"/>
<dbReference type="KEGG" id="btk:BT9727_3443"/>
<dbReference type="PATRIC" id="fig|281309.8.peg.3677"/>
<dbReference type="HOGENOM" id="CLU_173137_0_2_9"/>
<dbReference type="Proteomes" id="UP000001301">
    <property type="component" value="Chromosome"/>
</dbReference>
<dbReference type="GO" id="GO:0005737">
    <property type="term" value="C:cytoplasm"/>
    <property type="evidence" value="ECO:0007669"/>
    <property type="project" value="UniProtKB-SubCell"/>
</dbReference>
<dbReference type="Gene3D" id="1.10.287.540">
    <property type="entry name" value="Helix hairpin bin"/>
    <property type="match status" value="1"/>
</dbReference>
<dbReference type="HAMAP" id="MF_01103">
    <property type="entry name" value="UPF0291"/>
    <property type="match status" value="1"/>
</dbReference>
<dbReference type="InterPro" id="IPR009242">
    <property type="entry name" value="DUF896"/>
</dbReference>
<dbReference type="NCBIfam" id="NF002422">
    <property type="entry name" value="PRK01546.1"/>
    <property type="match status" value="1"/>
</dbReference>
<dbReference type="PANTHER" id="PTHR37300">
    <property type="entry name" value="UPF0291 PROTEIN CBO2609/CLC_2481"/>
    <property type="match status" value="1"/>
</dbReference>
<dbReference type="PANTHER" id="PTHR37300:SF1">
    <property type="entry name" value="UPF0291 PROTEIN YNZC"/>
    <property type="match status" value="1"/>
</dbReference>
<dbReference type="Pfam" id="PF05979">
    <property type="entry name" value="DUF896"/>
    <property type="match status" value="1"/>
</dbReference>
<dbReference type="SUPFAM" id="SSF158221">
    <property type="entry name" value="YnzC-like"/>
    <property type="match status" value="1"/>
</dbReference>
<name>Y3443_BACHK</name>
<evidence type="ECO:0000255" key="1">
    <source>
        <dbReference type="HAMAP-Rule" id="MF_01103"/>
    </source>
</evidence>
<proteinExistence type="inferred from homology"/>
<protein>
    <recommendedName>
        <fullName evidence="1">UPF0291 protein BT9727_3443</fullName>
    </recommendedName>
</protein>
<reference key="1">
    <citation type="journal article" date="2006" name="J. Bacteriol.">
        <title>Pathogenomic sequence analysis of Bacillus cereus and Bacillus thuringiensis isolates closely related to Bacillus anthracis.</title>
        <authorList>
            <person name="Han C.S."/>
            <person name="Xie G."/>
            <person name="Challacombe J.F."/>
            <person name="Altherr M.R."/>
            <person name="Bhotika S.S."/>
            <person name="Bruce D."/>
            <person name="Campbell C.S."/>
            <person name="Campbell M.L."/>
            <person name="Chen J."/>
            <person name="Chertkov O."/>
            <person name="Cleland C."/>
            <person name="Dimitrijevic M."/>
            <person name="Doggett N.A."/>
            <person name="Fawcett J.J."/>
            <person name="Glavina T."/>
            <person name="Goodwin L.A."/>
            <person name="Hill K.K."/>
            <person name="Hitchcock P."/>
            <person name="Jackson P.J."/>
            <person name="Keim P."/>
            <person name="Kewalramani A.R."/>
            <person name="Longmire J."/>
            <person name="Lucas S."/>
            <person name="Malfatti S."/>
            <person name="McMurry K."/>
            <person name="Meincke L.J."/>
            <person name="Misra M."/>
            <person name="Moseman B.L."/>
            <person name="Mundt M."/>
            <person name="Munk A.C."/>
            <person name="Okinaka R.T."/>
            <person name="Parson-Quintana B."/>
            <person name="Reilly L.P."/>
            <person name="Richardson P."/>
            <person name="Robinson D.L."/>
            <person name="Rubin E."/>
            <person name="Saunders E."/>
            <person name="Tapia R."/>
            <person name="Tesmer J.G."/>
            <person name="Thayer N."/>
            <person name="Thompson L.S."/>
            <person name="Tice H."/>
            <person name="Ticknor L.O."/>
            <person name="Wills P.L."/>
            <person name="Brettin T.S."/>
            <person name="Gilna P."/>
        </authorList>
    </citation>
    <scope>NUCLEOTIDE SEQUENCE [LARGE SCALE GENOMIC DNA]</scope>
    <source>
        <strain>97-27</strain>
    </source>
</reference>